<dbReference type="EC" id="1.3.7.5" evidence="1"/>
<dbReference type="EMBL" id="CP000110">
    <property type="protein sequence ID" value="ABB34971.1"/>
    <property type="molecule type" value="Genomic_DNA"/>
</dbReference>
<dbReference type="RefSeq" id="WP_011364192.1">
    <property type="nucleotide sequence ID" value="NC_007516.1"/>
</dbReference>
<dbReference type="SMR" id="Q3AKB1"/>
<dbReference type="STRING" id="110662.Syncc9605_1216"/>
<dbReference type="KEGG" id="syd:Syncc9605_1216"/>
<dbReference type="eggNOG" id="ENOG502Z7RN">
    <property type="taxonomic scope" value="Bacteria"/>
</dbReference>
<dbReference type="HOGENOM" id="CLU_074224_0_0_3"/>
<dbReference type="OrthoDB" id="581340at2"/>
<dbReference type="GO" id="GO:0050897">
    <property type="term" value="F:cobalt ion binding"/>
    <property type="evidence" value="ECO:0007669"/>
    <property type="project" value="InterPro"/>
</dbReference>
<dbReference type="GO" id="GO:0050620">
    <property type="term" value="F:phycocyanobilin:ferredoxin oxidoreductase activity"/>
    <property type="evidence" value="ECO:0007669"/>
    <property type="project" value="UniProtKB-UniRule"/>
</dbReference>
<dbReference type="GO" id="GO:0010024">
    <property type="term" value="P:phytochromobilin biosynthetic process"/>
    <property type="evidence" value="ECO:0007669"/>
    <property type="project" value="InterPro"/>
</dbReference>
<dbReference type="Gene3D" id="3.40.1500.20">
    <property type="match status" value="1"/>
</dbReference>
<dbReference type="HAMAP" id="MF_00618">
    <property type="entry name" value="Ferredoxin_bilin_red"/>
    <property type="match status" value="1"/>
</dbReference>
<dbReference type="InterPro" id="IPR009249">
    <property type="entry name" value="Ferredoxin-dep_bilin_Rdtase"/>
</dbReference>
<dbReference type="InterPro" id="IPR022870">
    <property type="entry name" value="Ferredoxin_bilin_OxRdtase"/>
</dbReference>
<dbReference type="NCBIfam" id="NF002760">
    <property type="entry name" value="PRK02816.1"/>
    <property type="match status" value="1"/>
</dbReference>
<dbReference type="PANTHER" id="PTHR34557">
    <property type="entry name" value="PHYTOCHROMOBILIN:FERREDOXIN OXIDOREDUCTASE, CHLOROPLASTIC"/>
    <property type="match status" value="1"/>
</dbReference>
<dbReference type="PANTHER" id="PTHR34557:SF1">
    <property type="entry name" value="PHYTOCHROMOBILIN:FERREDOXIN OXIDOREDUCTASE, CHLOROPLASTIC"/>
    <property type="match status" value="1"/>
</dbReference>
<dbReference type="Pfam" id="PF05996">
    <property type="entry name" value="Fe_bilin_red"/>
    <property type="match status" value="1"/>
</dbReference>
<comment type="function">
    <text evidence="1">Catalyzes the four-electron reduction of biliverdin IX-alpha (2-electron reduction at both the A and D rings); the reaction proceeds via an isolatable 2-electron intermediate, 181,182-dihydrobiliverdin.</text>
</comment>
<comment type="catalytic activity">
    <reaction evidence="1">
        <text>(2R,3Z)-phycocyanobilin + 4 oxidized [2Fe-2S]-[ferredoxin] = biliverdin IXalpha + 4 reduced [2Fe-2S]-[ferredoxin] + 4 H(+)</text>
        <dbReference type="Rhea" id="RHEA:15309"/>
        <dbReference type="Rhea" id="RHEA-COMP:10000"/>
        <dbReference type="Rhea" id="RHEA-COMP:10001"/>
        <dbReference type="ChEBI" id="CHEBI:15378"/>
        <dbReference type="ChEBI" id="CHEBI:33737"/>
        <dbReference type="ChEBI" id="CHEBI:33738"/>
        <dbReference type="ChEBI" id="CHEBI:57437"/>
        <dbReference type="ChEBI" id="CHEBI:57991"/>
        <dbReference type="EC" id="1.3.7.5"/>
    </reaction>
</comment>
<comment type="similarity">
    <text evidence="1">Belongs to the HY2 family.</text>
</comment>
<keyword id="KW-0560">Oxidoreductase</keyword>
<sequence length="247" mass="27429">MQPKPLAPPPGQHPLVQALAASIRSAWAGLPGLEILPCDEDLRFIQGQLDGEGLSIGNELFRCIGLRKLHLEVARLGNGLQILHSVWFPDPHYDLPIFGADIVAGPAGISAAIVDLSPTSDALPEQLIQRLEARPWPAFRQVRELPAWGSAIFSNKVCFIRPDGADEEAAFQQLVSHYLQVMATSVIEATPEQSTALTTVRRYEGQLNYCLQQKRNDKTRRVLEKAFDSAWADRYIDMLLFDNPPEL</sequence>
<gene>
    <name evidence="1" type="primary">pcyA</name>
    <name type="ordered locus">Syncc9605_1216</name>
</gene>
<reference key="1">
    <citation type="submission" date="2005-07" db="EMBL/GenBank/DDBJ databases">
        <title>Complete sequence of Synechococcus sp. CC9605.</title>
        <authorList>
            <consortium name="US DOE Joint Genome Institute"/>
            <person name="Copeland A."/>
            <person name="Lucas S."/>
            <person name="Lapidus A."/>
            <person name="Barry K."/>
            <person name="Detter J.C."/>
            <person name="Glavina T."/>
            <person name="Hammon N."/>
            <person name="Israni S."/>
            <person name="Pitluck S."/>
            <person name="Schmutz J."/>
            <person name="Martinez M."/>
            <person name="Larimer F."/>
            <person name="Land M."/>
            <person name="Kyrpides N."/>
            <person name="Ivanova N."/>
            <person name="Richardson P."/>
        </authorList>
    </citation>
    <scope>NUCLEOTIDE SEQUENCE [LARGE SCALE GENOMIC DNA]</scope>
    <source>
        <strain>CC9605</strain>
    </source>
</reference>
<proteinExistence type="inferred from homology"/>
<feature type="chain" id="PRO_1000061378" description="Phycocyanobilin:ferredoxin oxidoreductase">
    <location>
        <begin position="1"/>
        <end position="247"/>
    </location>
</feature>
<evidence type="ECO:0000255" key="1">
    <source>
        <dbReference type="HAMAP-Rule" id="MF_00618"/>
    </source>
</evidence>
<protein>
    <recommendedName>
        <fullName evidence="1">Phycocyanobilin:ferredoxin oxidoreductase</fullName>
        <ecNumber evidence="1">1.3.7.5</ecNumber>
    </recommendedName>
</protein>
<organism>
    <name type="scientific">Synechococcus sp. (strain CC9605)</name>
    <dbReference type="NCBI Taxonomy" id="110662"/>
    <lineage>
        <taxon>Bacteria</taxon>
        <taxon>Bacillati</taxon>
        <taxon>Cyanobacteriota</taxon>
        <taxon>Cyanophyceae</taxon>
        <taxon>Synechococcales</taxon>
        <taxon>Synechococcaceae</taxon>
        <taxon>Synechococcus</taxon>
    </lineage>
</organism>
<accession>Q3AKB1</accession>
<name>PCYA_SYNSC</name>